<feature type="chain" id="PRO_0000389094" description="Structural protein ORF326a">
    <location>
        <begin position="1"/>
        <end position="326"/>
    </location>
</feature>
<feature type="region of interest" description="Disordered" evidence="1">
    <location>
        <begin position="1"/>
        <end position="28"/>
    </location>
</feature>
<feature type="compositionally biased region" description="Acidic residues" evidence="1">
    <location>
        <begin position="11"/>
        <end position="26"/>
    </location>
</feature>
<organism>
    <name type="scientific">Acidianus two-tailed virus</name>
    <name type="common">ATV</name>
    <dbReference type="NCBI Taxonomy" id="315953"/>
    <lineage>
        <taxon>Viruses</taxon>
        <taxon>Viruses incertae sedis</taxon>
        <taxon>Bicaudaviridae</taxon>
        <taxon>Bicaudavirus</taxon>
    </lineage>
</organism>
<organismHost>
    <name type="scientific">Acidianus convivator</name>
    <dbReference type="NCBI Taxonomy" id="269667"/>
</organismHost>
<name>Y326A_ATV</name>
<evidence type="ECO:0000256" key="1">
    <source>
        <dbReference type="SAM" id="MobiDB-lite"/>
    </source>
</evidence>
<reference key="1">
    <citation type="journal article" date="2005" name="Nature">
        <title>Virology: independent virus development outside a host.</title>
        <authorList>
            <person name="Haring M."/>
            <person name="Vestergaard G."/>
            <person name="Rachel R."/>
            <person name="Chen L."/>
            <person name="Garrett R.A."/>
            <person name="Prangishvili D."/>
        </authorList>
    </citation>
    <scope>NUCLEOTIDE SEQUENCE [GENOMIC DNA]</scope>
</reference>
<sequence length="326" mass="37608">MSTTFRGKKEEEEEEEEEKEEKEEELFNPFKEEFLEEGKTVSEEINNPFEEEEEEEIPNPFEVETNYLPEIDKLLMLYQKGFIDKDMVDLASKILGIELDLGDYKQIGKSLIKVPIIIIAKPSHFGEIKQEIPEAEIADPYSKKYPIISLLSLEKTINTLTNAKMPWKRFSIFIDASYTTDIPQSAVALLNGLIDILRKAGYDVKLYTKYGEEPITLDEESASRFVSMENPNLAKILCHAKKVQGLDKTCDDSRWWEYDLWGNRKKNVIDQDKVRQIALKYNVSPVLVRYIANSIGNPRSLRRYAESFNVPEQLVMDIAKELSSSS</sequence>
<proteinExistence type="predicted"/>
<keyword id="KW-1185">Reference proteome</keyword>
<keyword id="KW-0946">Virion</keyword>
<accession>Q3V4V5</accession>
<comment type="subcellular location">
    <subcellularLocation>
        <location>Virion</location>
    </subcellularLocation>
</comment>
<dbReference type="EMBL" id="AJ888457">
    <property type="protein sequence ID" value="CAI59859.1"/>
    <property type="molecule type" value="Genomic_DNA"/>
</dbReference>
<dbReference type="RefSeq" id="YP_319864.1">
    <property type="nucleotide sequence ID" value="NC_007409.1"/>
</dbReference>
<dbReference type="SMR" id="Q3V4V5"/>
<dbReference type="GeneID" id="4484234"/>
<dbReference type="KEGG" id="vg:4484234"/>
<dbReference type="OrthoDB" id="22278at10239"/>
<dbReference type="Proteomes" id="UP000002150">
    <property type="component" value="Genome"/>
</dbReference>
<dbReference type="GO" id="GO:0044423">
    <property type="term" value="C:virion component"/>
    <property type="evidence" value="ECO:0007669"/>
    <property type="project" value="UniProtKB-KW"/>
</dbReference>
<protein>
    <recommendedName>
        <fullName>Structural protein ORF326a</fullName>
    </recommendedName>
</protein>